<accession>A4W6A1</accession>
<sequence length="240" mass="25996">MATPHINAEMGDFADVVLMPGDPLRAKHIAETFLEDVREVNNVRGMLGFTGTYKGRKISVMGHGMGIPSCSIYTKELITDFGVKKIIRVGSCGAVRMDVKLRDVVIGMGACTDSKVNRMRFKDHDFAAIADFGMVRNAVDAAKALGVDARVGNIFSADLFYSPDGGEMFDVMEKYGILGVEMEAAGIYGVAAEFGAKALTICTVSDHIRTHEQTSAAERQTTFNDMIKIALESVLLGDKE</sequence>
<gene>
    <name evidence="2" type="primary">deoD</name>
    <name type="ordered locus">Ent638_0544</name>
</gene>
<name>DEOD_ENT38</name>
<organism>
    <name type="scientific">Enterobacter sp. (strain 638)</name>
    <dbReference type="NCBI Taxonomy" id="399742"/>
    <lineage>
        <taxon>Bacteria</taxon>
        <taxon>Pseudomonadati</taxon>
        <taxon>Pseudomonadota</taxon>
        <taxon>Gammaproteobacteria</taxon>
        <taxon>Enterobacterales</taxon>
        <taxon>Enterobacteriaceae</taxon>
        <taxon>Enterobacter</taxon>
    </lineage>
</organism>
<feature type="chain" id="PRO_1000069628" description="Purine nucleoside phosphorylase DeoD-type">
    <location>
        <begin position="1"/>
        <end position="240"/>
    </location>
</feature>
<feature type="active site" description="Proton donor" evidence="2">
    <location>
        <position position="206"/>
    </location>
</feature>
<feature type="binding site" evidence="1">
    <location>
        <position position="5"/>
    </location>
    <ligand>
        <name>a purine D-ribonucleoside</name>
        <dbReference type="ChEBI" id="CHEBI:142355"/>
        <note>ligand shared between dimeric partners</note>
    </ligand>
</feature>
<feature type="binding site" description="in other chain" evidence="1">
    <location>
        <position position="21"/>
    </location>
    <ligand>
        <name>phosphate</name>
        <dbReference type="ChEBI" id="CHEBI:43474"/>
        <note>ligand shared between dimeric partners</note>
    </ligand>
</feature>
<feature type="binding site" description="in other chain" evidence="1">
    <location>
        <position position="25"/>
    </location>
    <ligand>
        <name>phosphate</name>
        <dbReference type="ChEBI" id="CHEBI:43474"/>
        <note>ligand shared between dimeric partners</note>
    </ligand>
</feature>
<feature type="binding site" evidence="1">
    <location>
        <position position="44"/>
    </location>
    <ligand>
        <name>phosphate</name>
        <dbReference type="ChEBI" id="CHEBI:43474"/>
        <note>ligand shared between dimeric partners</note>
    </ligand>
</feature>
<feature type="binding site" description="in other chain" evidence="1">
    <location>
        <begin position="88"/>
        <end position="91"/>
    </location>
    <ligand>
        <name>phosphate</name>
        <dbReference type="ChEBI" id="CHEBI:43474"/>
        <note>ligand shared between dimeric partners</note>
    </ligand>
</feature>
<feature type="binding site" description="in other chain" evidence="1">
    <location>
        <begin position="181"/>
        <end position="183"/>
    </location>
    <ligand>
        <name>a purine D-ribonucleoside</name>
        <dbReference type="ChEBI" id="CHEBI:142355"/>
        <note>ligand shared between dimeric partners</note>
    </ligand>
</feature>
<feature type="binding site" description="in other chain" evidence="1">
    <location>
        <begin position="205"/>
        <end position="206"/>
    </location>
    <ligand>
        <name>a purine D-ribonucleoside</name>
        <dbReference type="ChEBI" id="CHEBI:142355"/>
        <note>ligand shared between dimeric partners</note>
    </ligand>
</feature>
<feature type="site" description="Important for catalytic activity" evidence="2">
    <location>
        <position position="219"/>
    </location>
</feature>
<reference key="1">
    <citation type="journal article" date="2010" name="PLoS Genet.">
        <title>Genome sequence of the plant growth promoting endophytic bacterium Enterobacter sp. 638.</title>
        <authorList>
            <person name="Taghavi S."/>
            <person name="van der Lelie D."/>
            <person name="Hoffman A."/>
            <person name="Zhang Y.B."/>
            <person name="Walla M.D."/>
            <person name="Vangronsveld J."/>
            <person name="Newman L."/>
            <person name="Monchy S."/>
        </authorList>
    </citation>
    <scope>NUCLEOTIDE SEQUENCE [LARGE SCALE GENOMIC DNA]</scope>
    <source>
        <strain>638</strain>
    </source>
</reference>
<protein>
    <recommendedName>
        <fullName evidence="2">Purine nucleoside phosphorylase DeoD-type</fullName>
        <shortName evidence="2">PNP</shortName>
        <ecNumber evidence="2">2.4.2.1</ecNumber>
    </recommendedName>
</protein>
<dbReference type="EC" id="2.4.2.1" evidence="2"/>
<dbReference type="EMBL" id="CP000653">
    <property type="protein sequence ID" value="ABP59231.1"/>
    <property type="molecule type" value="Genomic_DNA"/>
</dbReference>
<dbReference type="RefSeq" id="WP_012015954.1">
    <property type="nucleotide sequence ID" value="NC_009436.1"/>
</dbReference>
<dbReference type="SMR" id="A4W6A1"/>
<dbReference type="STRING" id="399742.Ent638_0544"/>
<dbReference type="GeneID" id="93307716"/>
<dbReference type="KEGG" id="ent:Ent638_0544"/>
<dbReference type="eggNOG" id="COG0813">
    <property type="taxonomic scope" value="Bacteria"/>
</dbReference>
<dbReference type="HOGENOM" id="CLU_068457_2_0_6"/>
<dbReference type="OrthoDB" id="9782889at2"/>
<dbReference type="Proteomes" id="UP000000230">
    <property type="component" value="Chromosome"/>
</dbReference>
<dbReference type="GO" id="GO:0005829">
    <property type="term" value="C:cytosol"/>
    <property type="evidence" value="ECO:0007669"/>
    <property type="project" value="TreeGrafter"/>
</dbReference>
<dbReference type="GO" id="GO:0004731">
    <property type="term" value="F:purine-nucleoside phosphorylase activity"/>
    <property type="evidence" value="ECO:0007669"/>
    <property type="project" value="UniProtKB-UniRule"/>
</dbReference>
<dbReference type="GO" id="GO:0006152">
    <property type="term" value="P:purine nucleoside catabolic process"/>
    <property type="evidence" value="ECO:0007669"/>
    <property type="project" value="TreeGrafter"/>
</dbReference>
<dbReference type="CDD" id="cd09006">
    <property type="entry name" value="PNP_EcPNPI-like"/>
    <property type="match status" value="1"/>
</dbReference>
<dbReference type="FunFam" id="3.40.50.1580:FF:000002">
    <property type="entry name" value="Purine nucleoside phosphorylase DeoD-type"/>
    <property type="match status" value="1"/>
</dbReference>
<dbReference type="Gene3D" id="3.40.50.1580">
    <property type="entry name" value="Nucleoside phosphorylase domain"/>
    <property type="match status" value="1"/>
</dbReference>
<dbReference type="HAMAP" id="MF_01627">
    <property type="entry name" value="Pur_nucleosid_phosp"/>
    <property type="match status" value="1"/>
</dbReference>
<dbReference type="InterPro" id="IPR004402">
    <property type="entry name" value="DeoD-type"/>
</dbReference>
<dbReference type="InterPro" id="IPR018016">
    <property type="entry name" value="Nucleoside_phosphorylase_CS"/>
</dbReference>
<dbReference type="InterPro" id="IPR000845">
    <property type="entry name" value="Nucleoside_phosphorylase_d"/>
</dbReference>
<dbReference type="InterPro" id="IPR035994">
    <property type="entry name" value="Nucleoside_phosphorylase_sf"/>
</dbReference>
<dbReference type="NCBIfam" id="TIGR00107">
    <property type="entry name" value="deoD"/>
    <property type="match status" value="1"/>
</dbReference>
<dbReference type="NCBIfam" id="NF004489">
    <property type="entry name" value="PRK05819.1"/>
    <property type="match status" value="1"/>
</dbReference>
<dbReference type="NCBIfam" id="NF009914">
    <property type="entry name" value="PRK13374.1"/>
    <property type="match status" value="1"/>
</dbReference>
<dbReference type="PANTHER" id="PTHR43691:SF2">
    <property type="entry name" value="PURINE NUCLEOSIDE PHOSPHORYLASE DEOD-TYPE"/>
    <property type="match status" value="1"/>
</dbReference>
<dbReference type="PANTHER" id="PTHR43691">
    <property type="entry name" value="URIDINE PHOSPHORYLASE"/>
    <property type="match status" value="1"/>
</dbReference>
<dbReference type="Pfam" id="PF01048">
    <property type="entry name" value="PNP_UDP_1"/>
    <property type="match status" value="1"/>
</dbReference>
<dbReference type="SUPFAM" id="SSF53167">
    <property type="entry name" value="Purine and uridine phosphorylases"/>
    <property type="match status" value="1"/>
</dbReference>
<dbReference type="PROSITE" id="PS01232">
    <property type="entry name" value="PNP_UDP_1"/>
    <property type="match status" value="1"/>
</dbReference>
<evidence type="ECO:0000250" key="1">
    <source>
        <dbReference type="UniProtKB" id="P50389"/>
    </source>
</evidence>
<evidence type="ECO:0000255" key="2">
    <source>
        <dbReference type="HAMAP-Rule" id="MF_01627"/>
    </source>
</evidence>
<proteinExistence type="inferred from homology"/>
<comment type="function">
    <text evidence="2">Catalyzes the reversible phosphorolytic breakdown of the N-glycosidic bond in the beta-(deoxy)ribonucleoside molecules, with the formation of the corresponding free purine bases and pentose-1-phosphate.</text>
</comment>
<comment type="catalytic activity">
    <reaction evidence="2">
        <text>a purine D-ribonucleoside + phosphate = a purine nucleobase + alpha-D-ribose 1-phosphate</text>
        <dbReference type="Rhea" id="RHEA:19805"/>
        <dbReference type="ChEBI" id="CHEBI:26386"/>
        <dbReference type="ChEBI" id="CHEBI:43474"/>
        <dbReference type="ChEBI" id="CHEBI:57720"/>
        <dbReference type="ChEBI" id="CHEBI:142355"/>
        <dbReference type="EC" id="2.4.2.1"/>
    </reaction>
</comment>
<comment type="catalytic activity">
    <reaction evidence="2">
        <text>a purine 2'-deoxy-D-ribonucleoside + phosphate = a purine nucleobase + 2-deoxy-alpha-D-ribose 1-phosphate</text>
        <dbReference type="Rhea" id="RHEA:36431"/>
        <dbReference type="ChEBI" id="CHEBI:26386"/>
        <dbReference type="ChEBI" id="CHEBI:43474"/>
        <dbReference type="ChEBI" id="CHEBI:57259"/>
        <dbReference type="ChEBI" id="CHEBI:142361"/>
        <dbReference type="EC" id="2.4.2.1"/>
    </reaction>
</comment>
<comment type="subunit">
    <text evidence="2">Homohexamer; trimer of homodimers.</text>
</comment>
<comment type="similarity">
    <text evidence="2">Belongs to the PNP/UDP phosphorylase family.</text>
</comment>
<keyword id="KW-0328">Glycosyltransferase</keyword>
<keyword id="KW-0808">Transferase</keyword>